<geneLocation type="chloroplast"/>
<accession>Q14FH5</accession>
<sequence>MKIEKSQRNLEIDRSRKNDFLYPLIFREYIYTFAHDRDLNRSILLENVSYDNKYSLLIVKRLITRMYQQNHLIISANDSNQNTFFRYNKNLYFQMISEGFAVIVEIPFSLRLVSSLERSEIVKSHNLRSIHSIFPFLEGKFPHLNYLSEGLIPYPIHLEKLVQILRYWVKDPSSLHLLRLFLHEYWNLNSLIIPKKSISFFVKKNQRFFLFLYNSHVYEYESVFFFLCKQSFHFRLTFYQVFLERIYFYGKIEHFVEVFTKDWGDSLCLLKDPFIHYIRYQGKSIFVSKDTPLLMKKWKYYLVNLCQCHFDVCFQPQKIHINPFSLYKHSFALLGYLSSSSVRLNLSVVRSQMLENAFLMDNIMNKLDTTVSIIPLIGSLAKMKFCNAVGHPISKPTWADFSDSDIIDRFVRICRNLSHYYSGSSRKKSLYRIKYILRLSCVKTLARKHKSTVRIFLKRLGSELLEEFFTEEEQIIFLIFPRASSISQKLYRGRVWYLDIICINELSNHE</sequence>
<feature type="chain" id="PRO_0000355959" description="Maturase K">
    <location>
        <begin position="1"/>
        <end position="510"/>
    </location>
</feature>
<dbReference type="EMBL" id="AP008956">
    <property type="protein sequence ID" value="BAE97187.1"/>
    <property type="molecule type" value="Genomic_DNA"/>
</dbReference>
<dbReference type="RefSeq" id="YP_665540.1">
    <property type="nucleotide sequence ID" value="NC_008235.1"/>
</dbReference>
<dbReference type="GeneID" id="4178225"/>
<dbReference type="KEGG" id="palz:4178225"/>
<dbReference type="OrthoDB" id="28672at3646"/>
<dbReference type="GO" id="GO:0009507">
    <property type="term" value="C:chloroplast"/>
    <property type="evidence" value="ECO:0007669"/>
    <property type="project" value="UniProtKB-SubCell"/>
</dbReference>
<dbReference type="GO" id="GO:0003723">
    <property type="term" value="F:RNA binding"/>
    <property type="evidence" value="ECO:0007669"/>
    <property type="project" value="UniProtKB-KW"/>
</dbReference>
<dbReference type="GO" id="GO:0006397">
    <property type="term" value="P:mRNA processing"/>
    <property type="evidence" value="ECO:0007669"/>
    <property type="project" value="UniProtKB-KW"/>
</dbReference>
<dbReference type="GO" id="GO:0008380">
    <property type="term" value="P:RNA splicing"/>
    <property type="evidence" value="ECO:0007669"/>
    <property type="project" value="UniProtKB-UniRule"/>
</dbReference>
<dbReference type="GO" id="GO:0008033">
    <property type="term" value="P:tRNA processing"/>
    <property type="evidence" value="ECO:0007669"/>
    <property type="project" value="UniProtKB-KW"/>
</dbReference>
<dbReference type="HAMAP" id="MF_01390">
    <property type="entry name" value="MatK"/>
    <property type="match status" value="1"/>
</dbReference>
<dbReference type="InterPro" id="IPR024937">
    <property type="entry name" value="Domain_X"/>
</dbReference>
<dbReference type="InterPro" id="IPR002866">
    <property type="entry name" value="Maturase_MatK"/>
</dbReference>
<dbReference type="InterPro" id="IPR024942">
    <property type="entry name" value="Maturase_MatK_N"/>
</dbReference>
<dbReference type="PANTHER" id="PTHR34811">
    <property type="entry name" value="MATURASE K"/>
    <property type="match status" value="1"/>
</dbReference>
<dbReference type="PANTHER" id="PTHR34811:SF1">
    <property type="entry name" value="MATURASE K"/>
    <property type="match status" value="1"/>
</dbReference>
<dbReference type="Pfam" id="PF01348">
    <property type="entry name" value="Intron_maturas2"/>
    <property type="match status" value="1"/>
</dbReference>
<dbReference type="Pfam" id="PF01824">
    <property type="entry name" value="MatK_N"/>
    <property type="match status" value="1"/>
</dbReference>
<gene>
    <name evidence="1" type="primary">matK</name>
</gene>
<keyword id="KW-0150">Chloroplast</keyword>
<keyword id="KW-0507">mRNA processing</keyword>
<keyword id="KW-0934">Plastid</keyword>
<keyword id="KW-0694">RNA-binding</keyword>
<keyword id="KW-0819">tRNA processing</keyword>
<reference key="1">
    <citation type="submission" date="2005-03" db="EMBL/GenBank/DDBJ databases">
        <title>Complete structure of the chloroplast genome of Populus alba.</title>
        <authorList>
            <person name="Okumura S."/>
            <person name="Yamashita A."/>
            <person name="Kanamoto H."/>
            <person name="Hattori M."/>
            <person name="Takase H."/>
            <person name="Tomizawa K."/>
        </authorList>
    </citation>
    <scope>NUCLEOTIDE SEQUENCE [LARGE SCALE GENOMIC DNA]</scope>
</reference>
<evidence type="ECO:0000255" key="1">
    <source>
        <dbReference type="HAMAP-Rule" id="MF_01390"/>
    </source>
</evidence>
<name>MATK_POPAL</name>
<protein>
    <recommendedName>
        <fullName evidence="1">Maturase K</fullName>
    </recommendedName>
    <alternativeName>
        <fullName evidence="1">Intron maturase</fullName>
    </alternativeName>
</protein>
<organism>
    <name type="scientific">Populus alba</name>
    <name type="common">White poplar</name>
    <dbReference type="NCBI Taxonomy" id="43335"/>
    <lineage>
        <taxon>Eukaryota</taxon>
        <taxon>Viridiplantae</taxon>
        <taxon>Streptophyta</taxon>
        <taxon>Embryophyta</taxon>
        <taxon>Tracheophyta</taxon>
        <taxon>Spermatophyta</taxon>
        <taxon>Magnoliopsida</taxon>
        <taxon>eudicotyledons</taxon>
        <taxon>Gunneridae</taxon>
        <taxon>Pentapetalae</taxon>
        <taxon>rosids</taxon>
        <taxon>fabids</taxon>
        <taxon>Malpighiales</taxon>
        <taxon>Salicaceae</taxon>
        <taxon>Saliceae</taxon>
        <taxon>Populus</taxon>
    </lineage>
</organism>
<comment type="function">
    <text evidence="1">Usually encoded in the trnK tRNA gene intron. Probably assists in splicing its own and other chloroplast group II introns.</text>
</comment>
<comment type="subcellular location">
    <subcellularLocation>
        <location>Plastid</location>
        <location>Chloroplast</location>
    </subcellularLocation>
</comment>
<comment type="similarity">
    <text evidence="1">Belongs to the intron maturase 2 family. MatK subfamily.</text>
</comment>
<proteinExistence type="inferred from homology"/>